<gene>
    <name evidence="6" type="primary">RxLR28</name>
</gene>
<evidence type="ECO:0000255" key="1"/>
<evidence type="ECO:0000256" key="2">
    <source>
        <dbReference type="SAM" id="MobiDB-lite"/>
    </source>
</evidence>
<evidence type="ECO:0000269" key="3">
    <source>
    </source>
</evidence>
<evidence type="ECO:0000269" key="4">
    <source>
    </source>
</evidence>
<evidence type="ECO:0000269" key="5">
    <source ref="2"/>
</evidence>
<evidence type="ECO:0000303" key="6">
    <source ref="2"/>
</evidence>
<evidence type="ECO:0000305" key="7"/>
<evidence type="ECO:0000305" key="8">
    <source ref="2"/>
</evidence>
<sequence>MHVSRIIAHIALATAITATTVSPTDAAWGWTVKSTDEVKADKRDLVASRGLRGLIGQASPNEVSPANVPVSGIPLLGDKQPSGYPMLPADSPSTGSSLLNDDLLQENPVPPANGLVHGVPLLSSNQPLQTPMLSGNGPITGYRFFSGNESPMLPANSPITGLPLLSGNIPSTFEGEQISNGDEYQQNVDEDKGQNFGHSVSGPPTTTLTGPHTKSGIPPFENLVAPAKGSMPNTRRNGYQFFE</sequence>
<reference key="1">
    <citation type="journal article" date="2016" name="Front. Microbiol.">
        <title>Studying the mechanism of Plasmopara viticola RxLR effectors on suppressing plant immunity.</title>
        <authorList>
            <person name="Xiang J."/>
            <person name="Li X."/>
            <person name="Wu J."/>
            <person name="Yin L."/>
            <person name="Zhang Y."/>
            <person name="Lu J."/>
        </authorList>
    </citation>
    <scope>NUCLEOTIDE SEQUENCE [MRNA]</scope>
    <scope>FUNCTION</scope>
    <scope>SUBCELLULAR LOCATION</scope>
    <source>
        <strain>ZJ-1-1</strain>
    </source>
</reference>
<reference key="2">
    <citation type="journal article" date="2015" name="Physiol. Mol. Plant Pathol.">
        <title>Characterization of the secretome of Plasmopara viticola by de novo transcriptome analysis.</title>
        <authorList>
            <person name="Yin L."/>
            <person name="Li X."/>
            <person name="Xiang J."/>
            <person name="Qu J."/>
            <person name="Zhang Y."/>
            <person name="Dry I.B."/>
            <person name="Lu J."/>
        </authorList>
    </citation>
    <scope>IDENTIFICATION</scope>
    <scope>INDUCTION</scope>
    <scope>DOMAIN</scope>
</reference>
<reference key="3">
    <citation type="journal article" date="2018" name="Fungal Biol.">
        <title>Up-regulated RxLR effector genes of Plasmopara viticola in synchronized host-free stages and infected leaves of hosts with different susceptibility.</title>
        <authorList>
            <person name="Gomez-Zeledon J."/>
            <person name="Spring O."/>
        </authorList>
    </citation>
    <scope>INDUCTION</scope>
</reference>
<protein>
    <recommendedName>
        <fullName evidence="6">Secreted RxLR effector protein 28</fullName>
    </recommendedName>
</protein>
<comment type="function">
    <text evidence="3">Effector that significantly enhances susceptibilities of grapevine and tobacco to pathogens (PubMed:27242731). Acts as a broad suppressor of cell death to interrupt plant immunity. Completely inhibits cell death induced by cell death-inducing proteins, including the PAMP elicitor INF1 from P.infestans (PubMed:27242731). Reduces the transcriptional levels of the defense-related genes and impairs the H(2)O(2) accumulation in N.benthamiana (PubMed:27242731).</text>
</comment>
<comment type="subcellular location">
    <subcellularLocation>
        <location evidence="3">Secreted</location>
    </subcellularLocation>
    <subcellularLocation>
        <location evidence="3">Host cytoplasm</location>
    </subcellularLocation>
    <subcellularLocation>
        <location evidence="3">Host nucleus</location>
    </subcellularLocation>
</comment>
<comment type="induction">
    <text evidence="4 5">Expression is up-regulated at the earlier infection stages.</text>
</comment>
<comment type="domain">
    <text evidence="8">Has a conserved RxLR motif that acts to carry the protein into the host cell cytoplasm. Lacks the 'so-called' EER motif, which is found closely behind the RxLR motif in most of RxLR effector family members, but the presence of an EER motif is not always essential for the translocation of every RxLR effector into host cells, or for inducing a hypersensitive response.</text>
</comment>
<comment type="similarity">
    <text evidence="7">Belongs to the RxLR effector family.</text>
</comment>
<feature type="signal peptide" evidence="1">
    <location>
        <begin position="1"/>
        <end position="26"/>
    </location>
</feature>
<feature type="chain" id="PRO_5007999411" description="Secreted RxLR effector protein 28">
    <location>
        <begin position="27"/>
        <end position="243"/>
    </location>
</feature>
<feature type="region of interest" description="Disordered" evidence="2">
    <location>
        <begin position="187"/>
        <end position="243"/>
    </location>
</feature>
<feature type="short sequence motif" description="RxLR" evidence="8">
    <location>
        <begin position="49"/>
        <end position="52"/>
    </location>
</feature>
<feature type="compositionally biased region" description="Low complexity" evidence="2">
    <location>
        <begin position="199"/>
        <end position="216"/>
    </location>
</feature>
<organism>
    <name type="scientific">Plasmopara viticola</name>
    <name type="common">Downy mildew of grapevine</name>
    <name type="synonym">Botrytis viticola</name>
    <dbReference type="NCBI Taxonomy" id="143451"/>
    <lineage>
        <taxon>Eukaryota</taxon>
        <taxon>Sar</taxon>
        <taxon>Stramenopiles</taxon>
        <taxon>Oomycota</taxon>
        <taxon>Peronosporales</taxon>
        <taxon>Peronosporaceae</taxon>
        <taxon>Plasmopara</taxon>
    </lineage>
</organism>
<keyword id="KW-1035">Host cytoplasm</keyword>
<keyword id="KW-1048">Host nucleus</keyword>
<keyword id="KW-0964">Secreted</keyword>
<keyword id="KW-0732">Signal</keyword>
<keyword id="KW-0843">Virulence</keyword>
<proteinExistence type="evidence at transcript level"/>
<name>RLR28_PLAVT</name>
<dbReference type="EMBL" id="KX010958">
    <property type="protein sequence ID" value="ANC73378.1"/>
    <property type="molecule type" value="mRNA"/>
</dbReference>
<dbReference type="GO" id="GO:0005576">
    <property type="term" value="C:extracellular region"/>
    <property type="evidence" value="ECO:0007669"/>
    <property type="project" value="UniProtKB-SubCell"/>
</dbReference>
<dbReference type="GO" id="GO:0030430">
    <property type="term" value="C:host cell cytoplasm"/>
    <property type="evidence" value="ECO:0007669"/>
    <property type="project" value="UniProtKB-SubCell"/>
</dbReference>
<dbReference type="GO" id="GO:0042025">
    <property type="term" value="C:host cell nucleus"/>
    <property type="evidence" value="ECO:0007669"/>
    <property type="project" value="UniProtKB-SubCell"/>
</dbReference>
<accession>A0A172M4N0</accession>